<comment type="function">
    <text evidence="2 6">Substrate-specific adapter of a BCR (BTB-CUL3-RBX1) E3 ubiquitin ligase complex that mediates the ubiquitination of target proteins, such as NPTXR, WNK1, WNK3 and WNK4, leading most often to their proteasomal degradation (PubMed:21549840). The BCR(KLHL2) complex catalyzes ubiquitination and degradation of NPTXR (PubMed:21549840). Responsible for degradative ubiquitination of the WNK kinases WNK1, WNK3 and WNK4 (By similarity). Plays a role in the reorganization of the actin cytoskeleton (By similarity). Promotes growth of cell projections in oligodendrocyte precursors (By similarity).</text>
</comment>
<comment type="pathway">
    <text evidence="6">Protein modification; protein ubiquitination.</text>
</comment>
<comment type="subunit">
    <text evidence="2 6">Component of the BCR(KLHL2) E3 ubiquitin ligase complex, at least composed of CUL3 and KLHL2 and RBX1 (PubMed:21549840). Binds actin. Interacts with KLHL12 (By similarity). Interacts (via N-terminus) with FYN (via SH3 domain) (By similarity).</text>
</comment>
<comment type="subcellular location">
    <subcellularLocation>
        <location evidence="6">Cytoplasm</location>
        <location evidence="6">Cytoskeleton</location>
    </subcellularLocation>
    <subcellularLocation>
        <location evidence="6">Cell projection</location>
        <location evidence="6">Ruffle</location>
    </subcellularLocation>
    <subcellularLocation>
        <location evidence="2">Cell projection</location>
    </subcellularLocation>
    <subcellularLocation>
        <location evidence="1">Cell projection</location>
        <location evidence="1">Lamellipodium</location>
    </subcellularLocation>
    <subcellularLocation>
        <location evidence="6">Cytoplasm</location>
        <location evidence="6">Cytosol</location>
    </subcellularLocation>
    <text evidence="2 6">A proportion colocalizes with the actin cytoskeleton (By similarity). When over-expressed, colocalizes with NPTXR in perinuclear aggresomes (PubMed:21549840).</text>
</comment>
<comment type="sequence caution" evidence="8">
    <conflict type="erroneous initiation">
        <sequence resource="EMBL-CDS" id="BAC27712"/>
    </conflict>
    <text>Truncated N-terminus.</text>
</comment>
<keyword id="KW-0009">Actin-binding</keyword>
<keyword id="KW-0966">Cell projection</keyword>
<keyword id="KW-0963">Cytoplasm</keyword>
<keyword id="KW-0206">Cytoskeleton</keyword>
<keyword id="KW-0880">Kelch repeat</keyword>
<keyword id="KW-1185">Reference proteome</keyword>
<keyword id="KW-0677">Repeat</keyword>
<keyword id="KW-0833">Ubl conjugation pathway</keyword>
<accession>Q8JZP3</accession>
<accession>Q8CCU0</accession>
<accession>Q8R3U4</accession>
<proteinExistence type="evidence at transcript level"/>
<organism>
    <name type="scientific">Mus musculus</name>
    <name type="common">Mouse</name>
    <dbReference type="NCBI Taxonomy" id="10090"/>
    <lineage>
        <taxon>Eukaryota</taxon>
        <taxon>Metazoa</taxon>
        <taxon>Chordata</taxon>
        <taxon>Craniata</taxon>
        <taxon>Vertebrata</taxon>
        <taxon>Euteleostomi</taxon>
        <taxon>Mammalia</taxon>
        <taxon>Eutheria</taxon>
        <taxon>Euarchontoglires</taxon>
        <taxon>Glires</taxon>
        <taxon>Rodentia</taxon>
        <taxon>Myomorpha</taxon>
        <taxon>Muroidea</taxon>
        <taxon>Muridae</taxon>
        <taxon>Murinae</taxon>
        <taxon>Mus</taxon>
        <taxon>Mus</taxon>
    </lineage>
</organism>
<sequence length="593" mass="65983">METPPLPPACTKQGHQKPLDSKDENPEKHCPLTVNPWHMKKAFKVMNELRSQNLLCDVTIVAEDMEIPAHRVVLAACSPYFHAMFTGEMSESRAKRVRIKEVDGWTLRMLVDYVYTAEIQVTEENVQVLLPAAGLLQLQDVKKTCCEFLESQLHPVNCLGIRAFADMHACTDLLNKANTYAEQHFADVVLSEEFLNLGIEQVCSLISSDKLTISSEEKVFEAVIAWVNHDKDVRQEFMARLMEHVRLPLLPREYLVQRVEEEALVKNSSACKDYLIEAMKYHLLPTEQRMLMKSVRTRLRTPMNLPKLMVVVGGQAPKAIRSVECYDFKEERWHQVAELPSRRCRAGMVYMAGLVFAVGGFNGSLRVRTVDSYDPVKDQWTSVANMRDRRSTLGAAVLNGLLYAVGGFDGSTGLSSVEAYNIKSNEWFHVAPMNTRRSSVGVGVVGGLLYAVGGYDGASRQCLSTVECYNATANEWTYIAEMSTRRSGAGVGVLNNLLYAVGGHDGPLVRKSVEVYDPTTNAWRQVADMNMCRRNAGVCAVNGLLYVVGGDDGSCNLASVEYYNPTTDKWTVVSSCMSTGRSYAGVTVIDKPL</sequence>
<feature type="chain" id="PRO_0000119102" description="Kelch-like protein 2">
    <location>
        <begin position="1"/>
        <end position="593"/>
    </location>
</feature>
<feature type="domain" description="BTB" evidence="4">
    <location>
        <begin position="56"/>
        <end position="123"/>
    </location>
</feature>
<feature type="repeat" description="Kelch 1" evidence="3">
    <location>
        <begin position="308"/>
        <end position="353"/>
    </location>
</feature>
<feature type="repeat" description="Kelch 2" evidence="3">
    <location>
        <begin position="354"/>
        <end position="400"/>
    </location>
</feature>
<feature type="repeat" description="Kelch 3" evidence="3">
    <location>
        <begin position="402"/>
        <end position="447"/>
    </location>
</feature>
<feature type="repeat" description="Kelch 4" evidence="3">
    <location>
        <begin position="449"/>
        <end position="496"/>
    </location>
</feature>
<feature type="repeat" description="Kelch 5" evidence="3">
    <location>
        <begin position="497"/>
        <end position="543"/>
    </location>
</feature>
<feature type="repeat" description="Kelch 6" evidence="3">
    <location>
        <begin position="545"/>
        <end position="591"/>
    </location>
</feature>
<feature type="region of interest" description="Disordered" evidence="5">
    <location>
        <begin position="1"/>
        <end position="29"/>
    </location>
</feature>
<feature type="compositionally biased region" description="Basic and acidic residues" evidence="5">
    <location>
        <begin position="17"/>
        <end position="29"/>
    </location>
</feature>
<evidence type="ECO:0000250" key="1">
    <source>
        <dbReference type="UniProtKB" id="F1LZF0"/>
    </source>
</evidence>
<evidence type="ECO:0000250" key="2">
    <source>
        <dbReference type="UniProtKB" id="O95198"/>
    </source>
</evidence>
<evidence type="ECO:0000255" key="3"/>
<evidence type="ECO:0000255" key="4">
    <source>
        <dbReference type="PROSITE-ProRule" id="PRU00037"/>
    </source>
</evidence>
<evidence type="ECO:0000256" key="5">
    <source>
        <dbReference type="SAM" id="MobiDB-lite"/>
    </source>
</evidence>
<evidence type="ECO:0000269" key="6">
    <source>
    </source>
</evidence>
<evidence type="ECO:0000303" key="7">
    <source>
    </source>
</evidence>
<evidence type="ECO:0000305" key="8"/>
<evidence type="ECO:0000312" key="9">
    <source>
        <dbReference type="EMBL" id="AAH24572.1"/>
    </source>
</evidence>
<evidence type="ECO:0000312" key="10">
    <source>
        <dbReference type="EMBL" id="AAH31142.1"/>
    </source>
</evidence>
<evidence type="ECO:0000312" key="11">
    <source>
        <dbReference type="MGI" id="MGI:1924363"/>
    </source>
</evidence>
<gene>
    <name evidence="7 11" type="primary">Klhl2</name>
</gene>
<name>KLHL2_MOUSE</name>
<reference evidence="10" key="1">
    <citation type="journal article" date="2004" name="Genome Res.">
        <title>The status, quality, and expansion of the NIH full-length cDNA project: the Mammalian Gene Collection (MGC).</title>
        <authorList>
            <consortium name="The MGC Project Team"/>
        </authorList>
    </citation>
    <scope>NUCLEOTIDE SEQUENCE [LARGE SCALE MRNA]</scope>
    <source>
        <strain evidence="9">Czech II</strain>
        <strain evidence="10">FVB/N</strain>
        <tissue evidence="10">Kidney</tissue>
        <tissue evidence="9">Lung</tissue>
    </source>
</reference>
<reference key="2">
    <citation type="journal article" date="2005" name="Science">
        <title>The transcriptional landscape of the mammalian genome.</title>
        <authorList>
            <person name="Carninci P."/>
            <person name="Kasukawa T."/>
            <person name="Katayama S."/>
            <person name="Gough J."/>
            <person name="Frith M.C."/>
            <person name="Maeda N."/>
            <person name="Oyama R."/>
            <person name="Ravasi T."/>
            <person name="Lenhard B."/>
            <person name="Wells C."/>
            <person name="Kodzius R."/>
            <person name="Shimokawa K."/>
            <person name="Bajic V.B."/>
            <person name="Brenner S.E."/>
            <person name="Batalov S."/>
            <person name="Forrest A.R."/>
            <person name="Zavolan M."/>
            <person name="Davis M.J."/>
            <person name="Wilming L.G."/>
            <person name="Aidinis V."/>
            <person name="Allen J.E."/>
            <person name="Ambesi-Impiombato A."/>
            <person name="Apweiler R."/>
            <person name="Aturaliya R.N."/>
            <person name="Bailey T.L."/>
            <person name="Bansal M."/>
            <person name="Baxter L."/>
            <person name="Beisel K.W."/>
            <person name="Bersano T."/>
            <person name="Bono H."/>
            <person name="Chalk A.M."/>
            <person name="Chiu K.P."/>
            <person name="Choudhary V."/>
            <person name="Christoffels A."/>
            <person name="Clutterbuck D.R."/>
            <person name="Crowe M.L."/>
            <person name="Dalla E."/>
            <person name="Dalrymple B.P."/>
            <person name="de Bono B."/>
            <person name="Della Gatta G."/>
            <person name="di Bernardo D."/>
            <person name="Down T."/>
            <person name="Engstrom P."/>
            <person name="Fagiolini M."/>
            <person name="Faulkner G."/>
            <person name="Fletcher C.F."/>
            <person name="Fukushima T."/>
            <person name="Furuno M."/>
            <person name="Futaki S."/>
            <person name="Gariboldi M."/>
            <person name="Georgii-Hemming P."/>
            <person name="Gingeras T.R."/>
            <person name="Gojobori T."/>
            <person name="Green R.E."/>
            <person name="Gustincich S."/>
            <person name="Harbers M."/>
            <person name="Hayashi Y."/>
            <person name="Hensch T.K."/>
            <person name="Hirokawa N."/>
            <person name="Hill D."/>
            <person name="Huminiecki L."/>
            <person name="Iacono M."/>
            <person name="Ikeo K."/>
            <person name="Iwama A."/>
            <person name="Ishikawa T."/>
            <person name="Jakt M."/>
            <person name="Kanapin A."/>
            <person name="Katoh M."/>
            <person name="Kawasawa Y."/>
            <person name="Kelso J."/>
            <person name="Kitamura H."/>
            <person name="Kitano H."/>
            <person name="Kollias G."/>
            <person name="Krishnan S.P."/>
            <person name="Kruger A."/>
            <person name="Kummerfeld S.K."/>
            <person name="Kurochkin I.V."/>
            <person name="Lareau L.F."/>
            <person name="Lazarevic D."/>
            <person name="Lipovich L."/>
            <person name="Liu J."/>
            <person name="Liuni S."/>
            <person name="McWilliam S."/>
            <person name="Madan Babu M."/>
            <person name="Madera M."/>
            <person name="Marchionni L."/>
            <person name="Matsuda H."/>
            <person name="Matsuzawa S."/>
            <person name="Miki H."/>
            <person name="Mignone F."/>
            <person name="Miyake S."/>
            <person name="Morris K."/>
            <person name="Mottagui-Tabar S."/>
            <person name="Mulder N."/>
            <person name="Nakano N."/>
            <person name="Nakauchi H."/>
            <person name="Ng P."/>
            <person name="Nilsson R."/>
            <person name="Nishiguchi S."/>
            <person name="Nishikawa S."/>
            <person name="Nori F."/>
            <person name="Ohara O."/>
            <person name="Okazaki Y."/>
            <person name="Orlando V."/>
            <person name="Pang K.C."/>
            <person name="Pavan W.J."/>
            <person name="Pavesi G."/>
            <person name="Pesole G."/>
            <person name="Petrovsky N."/>
            <person name="Piazza S."/>
            <person name="Reed J."/>
            <person name="Reid J.F."/>
            <person name="Ring B.Z."/>
            <person name="Ringwald M."/>
            <person name="Rost B."/>
            <person name="Ruan Y."/>
            <person name="Salzberg S.L."/>
            <person name="Sandelin A."/>
            <person name="Schneider C."/>
            <person name="Schoenbach C."/>
            <person name="Sekiguchi K."/>
            <person name="Semple C.A."/>
            <person name="Seno S."/>
            <person name="Sessa L."/>
            <person name="Sheng Y."/>
            <person name="Shibata Y."/>
            <person name="Shimada H."/>
            <person name="Shimada K."/>
            <person name="Silva D."/>
            <person name="Sinclair B."/>
            <person name="Sperling S."/>
            <person name="Stupka E."/>
            <person name="Sugiura K."/>
            <person name="Sultana R."/>
            <person name="Takenaka Y."/>
            <person name="Taki K."/>
            <person name="Tammoja K."/>
            <person name="Tan S.L."/>
            <person name="Tang S."/>
            <person name="Taylor M.S."/>
            <person name="Tegner J."/>
            <person name="Teichmann S.A."/>
            <person name="Ueda H.R."/>
            <person name="van Nimwegen E."/>
            <person name="Verardo R."/>
            <person name="Wei C.L."/>
            <person name="Yagi K."/>
            <person name="Yamanishi H."/>
            <person name="Zabarovsky E."/>
            <person name="Zhu S."/>
            <person name="Zimmer A."/>
            <person name="Hide W."/>
            <person name="Bult C."/>
            <person name="Grimmond S.M."/>
            <person name="Teasdale R.D."/>
            <person name="Liu E.T."/>
            <person name="Brusic V."/>
            <person name="Quackenbush J."/>
            <person name="Wahlestedt C."/>
            <person name="Mattick J.S."/>
            <person name="Hume D.A."/>
            <person name="Kai C."/>
            <person name="Sasaki D."/>
            <person name="Tomaru Y."/>
            <person name="Fukuda S."/>
            <person name="Kanamori-Katayama M."/>
            <person name="Suzuki M."/>
            <person name="Aoki J."/>
            <person name="Arakawa T."/>
            <person name="Iida J."/>
            <person name="Imamura K."/>
            <person name="Itoh M."/>
            <person name="Kato T."/>
            <person name="Kawaji H."/>
            <person name="Kawagashira N."/>
            <person name="Kawashima T."/>
            <person name="Kojima M."/>
            <person name="Kondo S."/>
            <person name="Konno H."/>
            <person name="Nakano K."/>
            <person name="Ninomiya N."/>
            <person name="Nishio T."/>
            <person name="Okada M."/>
            <person name="Plessy C."/>
            <person name="Shibata K."/>
            <person name="Shiraki T."/>
            <person name="Suzuki S."/>
            <person name="Tagami M."/>
            <person name="Waki K."/>
            <person name="Watahiki A."/>
            <person name="Okamura-Oho Y."/>
            <person name="Suzuki H."/>
            <person name="Kawai J."/>
            <person name="Hayashizaki Y."/>
        </authorList>
    </citation>
    <scope>NUCLEOTIDE SEQUENCE [LARGE SCALE MRNA] OF 64-593</scope>
    <source>
        <strain>C57BL/6J</strain>
        <tissue>Medulla oblongata</tissue>
    </source>
</reference>
<reference key="3">
    <citation type="journal article" date="2011" name="Mol. Cell. Neurosci.">
        <title>Interaction of an intracellular pentraxin with a BTB-Kelch protein is associated with ubiquitylation, aggregation and neuronal apoptosis.</title>
        <authorList>
            <person name="Tseng L.A."/>
            <person name="Bixby J.L."/>
        </authorList>
    </citation>
    <scope>FUNCTION</scope>
    <scope>PATHWAY</scope>
    <scope>SUBCELLULAR LOCATION</scope>
</reference>
<protein>
    <recommendedName>
        <fullName evidence="8">Kelch-like protein 2</fullName>
    </recommendedName>
</protein>
<dbReference type="EMBL" id="BC024572">
    <property type="protein sequence ID" value="AAH24572.1"/>
    <property type="molecule type" value="mRNA"/>
</dbReference>
<dbReference type="EMBL" id="BC031142">
    <property type="protein sequence ID" value="AAH31142.1"/>
    <property type="molecule type" value="mRNA"/>
</dbReference>
<dbReference type="EMBL" id="BC031144">
    <property type="protein sequence ID" value="AAH31144.1"/>
    <property type="molecule type" value="mRNA"/>
</dbReference>
<dbReference type="EMBL" id="AK032116">
    <property type="protein sequence ID" value="BAC27712.1"/>
    <property type="status" value="ALT_INIT"/>
    <property type="molecule type" value="mRNA"/>
</dbReference>
<dbReference type="CCDS" id="CCDS85544.1"/>
<dbReference type="RefSeq" id="NP_848748.2">
    <property type="nucleotide sequence ID" value="NM_178633.3"/>
</dbReference>
<dbReference type="SMR" id="Q8JZP3"/>
<dbReference type="BioGRID" id="218522">
    <property type="interactions" value="4"/>
</dbReference>
<dbReference type="FunCoup" id="Q8JZP3">
    <property type="interactions" value="961"/>
</dbReference>
<dbReference type="STRING" id="10090.ENSMUSP00000034017"/>
<dbReference type="PhosphoSitePlus" id="Q8JZP3"/>
<dbReference type="PaxDb" id="10090-ENSMUSP00000034017"/>
<dbReference type="ProteomicsDB" id="263658"/>
<dbReference type="Antibodypedia" id="28300">
    <property type="antibodies" value="302 antibodies from 23 providers"/>
</dbReference>
<dbReference type="DNASU" id="77113"/>
<dbReference type="Ensembl" id="ENSMUST00000034017.9">
    <property type="protein sequence ID" value="ENSMUSP00000034017.8"/>
    <property type="gene ID" value="ENSMUSG00000031605.9"/>
</dbReference>
<dbReference type="GeneID" id="77113"/>
<dbReference type="KEGG" id="mmu:77113"/>
<dbReference type="UCSC" id="uc057alr.1">
    <property type="organism name" value="mouse"/>
</dbReference>
<dbReference type="AGR" id="MGI:1924363"/>
<dbReference type="CTD" id="11275"/>
<dbReference type="MGI" id="MGI:1924363">
    <property type="gene designation" value="Klhl2"/>
</dbReference>
<dbReference type="VEuPathDB" id="HostDB:ENSMUSG00000031605"/>
<dbReference type="eggNOG" id="KOG4441">
    <property type="taxonomic scope" value="Eukaryota"/>
</dbReference>
<dbReference type="GeneTree" id="ENSGT00940000156434"/>
<dbReference type="HOGENOM" id="CLU_004253_14_2_1"/>
<dbReference type="InParanoid" id="Q8JZP3"/>
<dbReference type="OMA" id="RPPACTK"/>
<dbReference type="OrthoDB" id="45365at2759"/>
<dbReference type="PhylomeDB" id="Q8JZP3"/>
<dbReference type="TreeFam" id="TF329218"/>
<dbReference type="Reactome" id="R-MMU-8951664">
    <property type="pathway name" value="Neddylation"/>
</dbReference>
<dbReference type="Reactome" id="R-MMU-983168">
    <property type="pathway name" value="Antigen processing: Ubiquitination &amp; Proteasome degradation"/>
</dbReference>
<dbReference type="UniPathway" id="UPA00143"/>
<dbReference type="BioGRID-ORCS" id="77113">
    <property type="hits" value="2 hits in 23 CRISPR screens"/>
</dbReference>
<dbReference type="ChiTaRS" id="Klhl2">
    <property type="organism name" value="mouse"/>
</dbReference>
<dbReference type="PRO" id="PR:Q8JZP3"/>
<dbReference type="Proteomes" id="UP000000589">
    <property type="component" value="Chromosome 8"/>
</dbReference>
<dbReference type="RNAct" id="Q8JZP3">
    <property type="molecule type" value="protein"/>
</dbReference>
<dbReference type="Bgee" id="ENSMUSG00000031605">
    <property type="expression patterns" value="Expressed in caudate-putamen and 239 other cell types or tissues"/>
</dbReference>
<dbReference type="ExpressionAtlas" id="Q8JZP3">
    <property type="expression patterns" value="baseline and differential"/>
</dbReference>
<dbReference type="GO" id="GO:0015629">
    <property type="term" value="C:actin cytoskeleton"/>
    <property type="evidence" value="ECO:0000250"/>
    <property type="project" value="UniProtKB"/>
</dbReference>
<dbReference type="GO" id="GO:0031463">
    <property type="term" value="C:Cul3-RING ubiquitin ligase complex"/>
    <property type="evidence" value="ECO:0000314"/>
    <property type="project" value="UniProtKB"/>
</dbReference>
<dbReference type="GO" id="GO:0005737">
    <property type="term" value="C:cytoplasm"/>
    <property type="evidence" value="ECO:0000314"/>
    <property type="project" value="UniProtKB"/>
</dbReference>
<dbReference type="GO" id="GO:0005829">
    <property type="term" value="C:cytosol"/>
    <property type="evidence" value="ECO:0007669"/>
    <property type="project" value="UniProtKB-SubCell"/>
</dbReference>
<dbReference type="GO" id="GO:0030027">
    <property type="term" value="C:lamellipodium"/>
    <property type="evidence" value="ECO:0007669"/>
    <property type="project" value="UniProtKB-SubCell"/>
</dbReference>
<dbReference type="GO" id="GO:0001726">
    <property type="term" value="C:ruffle"/>
    <property type="evidence" value="ECO:0007669"/>
    <property type="project" value="UniProtKB-SubCell"/>
</dbReference>
<dbReference type="GO" id="GO:0001725">
    <property type="term" value="C:stress fiber"/>
    <property type="evidence" value="ECO:0000266"/>
    <property type="project" value="MGI"/>
</dbReference>
<dbReference type="GO" id="GO:0003779">
    <property type="term" value="F:actin binding"/>
    <property type="evidence" value="ECO:0000250"/>
    <property type="project" value="UniProtKB"/>
</dbReference>
<dbReference type="GO" id="GO:0042803">
    <property type="term" value="F:protein homodimerization activity"/>
    <property type="evidence" value="ECO:0000266"/>
    <property type="project" value="MGI"/>
</dbReference>
<dbReference type="GO" id="GO:1990756">
    <property type="term" value="F:ubiquitin-like ligase-substrate adaptor activity"/>
    <property type="evidence" value="ECO:0000250"/>
    <property type="project" value="UniProtKB"/>
</dbReference>
<dbReference type="GO" id="GO:0016567">
    <property type="term" value="P:protein ubiquitination"/>
    <property type="evidence" value="ECO:0000314"/>
    <property type="project" value="UniProtKB"/>
</dbReference>
<dbReference type="CDD" id="cd18512">
    <property type="entry name" value="BACK_KLHL2_Mayven"/>
    <property type="match status" value="1"/>
</dbReference>
<dbReference type="CDD" id="cd18338">
    <property type="entry name" value="BTB_POZ_KLHL2_Mayven"/>
    <property type="match status" value="1"/>
</dbReference>
<dbReference type="FunFam" id="1.25.40.420:FF:000001">
    <property type="entry name" value="Kelch-like family member 12"/>
    <property type="match status" value="1"/>
</dbReference>
<dbReference type="FunFam" id="2.120.10.80:FF:000002">
    <property type="entry name" value="Kelch-like family member 2"/>
    <property type="match status" value="1"/>
</dbReference>
<dbReference type="FunFam" id="3.30.710.10:FF:000001">
    <property type="entry name" value="Kelch-like family member 20"/>
    <property type="match status" value="1"/>
</dbReference>
<dbReference type="Gene3D" id="1.25.40.420">
    <property type="match status" value="1"/>
</dbReference>
<dbReference type="Gene3D" id="2.120.10.80">
    <property type="entry name" value="Kelch-type beta propeller"/>
    <property type="match status" value="1"/>
</dbReference>
<dbReference type="Gene3D" id="3.30.710.10">
    <property type="entry name" value="Potassium Channel Kv1.1, Chain A"/>
    <property type="match status" value="1"/>
</dbReference>
<dbReference type="InterPro" id="IPR011705">
    <property type="entry name" value="BACK"/>
</dbReference>
<dbReference type="InterPro" id="IPR017096">
    <property type="entry name" value="BTB-kelch_protein"/>
</dbReference>
<dbReference type="InterPro" id="IPR000210">
    <property type="entry name" value="BTB/POZ_dom"/>
</dbReference>
<dbReference type="InterPro" id="IPR015915">
    <property type="entry name" value="Kelch-typ_b-propeller"/>
</dbReference>
<dbReference type="InterPro" id="IPR006652">
    <property type="entry name" value="Kelch_1"/>
</dbReference>
<dbReference type="InterPro" id="IPR044072">
    <property type="entry name" value="KLHL2_BTB/POZ"/>
</dbReference>
<dbReference type="InterPro" id="IPR011333">
    <property type="entry name" value="SKP1/BTB/POZ_sf"/>
</dbReference>
<dbReference type="PANTHER" id="PTHR24412">
    <property type="entry name" value="KELCH PROTEIN"/>
    <property type="match status" value="1"/>
</dbReference>
<dbReference type="PANTHER" id="PTHR24412:SF155">
    <property type="entry name" value="KELCH-LIKE PROTEIN 2"/>
    <property type="match status" value="1"/>
</dbReference>
<dbReference type="Pfam" id="PF07707">
    <property type="entry name" value="BACK"/>
    <property type="match status" value="1"/>
</dbReference>
<dbReference type="Pfam" id="PF00651">
    <property type="entry name" value="BTB"/>
    <property type="match status" value="1"/>
</dbReference>
<dbReference type="Pfam" id="PF01344">
    <property type="entry name" value="Kelch_1"/>
    <property type="match status" value="6"/>
</dbReference>
<dbReference type="PIRSF" id="PIRSF037037">
    <property type="entry name" value="Kelch-like_protein_gigaxonin"/>
    <property type="match status" value="1"/>
</dbReference>
<dbReference type="PRINTS" id="PR00501">
    <property type="entry name" value="KELCHREPEAT"/>
</dbReference>
<dbReference type="SMART" id="SM00875">
    <property type="entry name" value="BACK"/>
    <property type="match status" value="1"/>
</dbReference>
<dbReference type="SMART" id="SM00225">
    <property type="entry name" value="BTB"/>
    <property type="match status" value="1"/>
</dbReference>
<dbReference type="SMART" id="SM00612">
    <property type="entry name" value="Kelch"/>
    <property type="match status" value="6"/>
</dbReference>
<dbReference type="SUPFAM" id="SSF117281">
    <property type="entry name" value="Kelch motif"/>
    <property type="match status" value="1"/>
</dbReference>
<dbReference type="SUPFAM" id="SSF54695">
    <property type="entry name" value="POZ domain"/>
    <property type="match status" value="1"/>
</dbReference>
<dbReference type="PROSITE" id="PS50097">
    <property type="entry name" value="BTB"/>
    <property type="match status" value="1"/>
</dbReference>